<sequence length="424" mass="48683">MELTQENTEENEKTHVESIVKFEDSNRGTITDFHIETANNEEEKDANVILNKSVKMEVEEVNGHVDSSSTETDIEMQVIQQPTIPKKPPVSAHRRGPRKHRGNANSQLNLSTADHQRPLYCICQKPDDGSWMLGCDGCEDWFHGTCVNIPESYNDLTVQYFCPKCTEEGKGITTWKRKCRLRECSNPTRPNSNYCSDKHGVDFFREKVKLSTVEPSAIKNLVLFAKKREEFQNLGTVGPTLPSQVPPEVVYNFEIEEANRLNAEIVQLNKEKEVASNKKIFLQLIKDSSRRAVLAYKEREGIKKDLCGFDSRLLFNQQQMNELWEKVSNGAPLSLDMSIDPSPESTCFTEKRRCAKHTSWQVIFTEDFELQESNILQKLNMKQTAKDVMLEHQKQRCLPGIQYDGYARFCHEQLSPEKMANLLK</sequence>
<organism>
    <name type="scientific">Schizosaccharomyces pombe (strain 972 / ATCC 24843)</name>
    <name type="common">Fission yeast</name>
    <dbReference type="NCBI Taxonomy" id="284812"/>
    <lineage>
        <taxon>Eukaryota</taxon>
        <taxon>Fungi</taxon>
        <taxon>Dikarya</taxon>
        <taxon>Ascomycota</taxon>
        <taxon>Taphrinomycotina</taxon>
        <taxon>Schizosaccharomycetes</taxon>
        <taxon>Schizosaccharomycetales</taxon>
        <taxon>Schizosaccharomycetaceae</taxon>
        <taxon>Schizosaccharomyces</taxon>
    </lineage>
</organism>
<comment type="function">
    <text evidence="3">The Set1 complex specifically methylates 'Lys-4' of histone H3.</text>
</comment>
<comment type="subunit">
    <text evidence="3 4">Component of the Set1 complex composed of ash2, sdc1, set1, shg1, spp1, swd1, swd2 and swd3.</text>
</comment>
<comment type="subcellular location">
    <subcellularLocation>
        <location evidence="5">Nucleus</location>
    </subcellularLocation>
</comment>
<protein>
    <recommendedName>
        <fullName>Set1 complex component spp1</fullName>
        <shortName>Set1C component spp1</shortName>
    </recommendedName>
    <alternativeName>
        <fullName>COMPASS component spp1</fullName>
    </alternativeName>
    <alternativeName>
        <fullName>Complex proteins associated with set1 protein spp1</fullName>
    </alternativeName>
</protein>
<keyword id="KW-0479">Metal-binding</keyword>
<keyword id="KW-0539">Nucleus</keyword>
<keyword id="KW-1185">Reference proteome</keyword>
<keyword id="KW-0862">Zinc</keyword>
<keyword id="KW-0863">Zinc-finger</keyword>
<dbReference type="EMBL" id="CU329672">
    <property type="protein sequence ID" value="CAA20664.1"/>
    <property type="molecule type" value="Genomic_DNA"/>
</dbReference>
<dbReference type="PIR" id="T41449">
    <property type="entry name" value="T41449"/>
</dbReference>
<dbReference type="RefSeq" id="NP_587791.1">
    <property type="nucleotide sequence ID" value="NM_001022784.2"/>
</dbReference>
<dbReference type="SMR" id="O74508"/>
<dbReference type="BioGRID" id="275596">
    <property type="interactions" value="194"/>
</dbReference>
<dbReference type="ComplexPortal" id="CPX-10325">
    <property type="entry name" value="COMPASS complex"/>
</dbReference>
<dbReference type="FunCoup" id="O74508">
    <property type="interactions" value="7"/>
</dbReference>
<dbReference type="STRING" id="284812.O74508"/>
<dbReference type="iPTMnet" id="O74508"/>
<dbReference type="PaxDb" id="4896-SPCC594.05c.1"/>
<dbReference type="EnsemblFungi" id="SPCC594.05c.1">
    <property type="protein sequence ID" value="SPCC594.05c.1:pep"/>
    <property type="gene ID" value="SPCC594.05c"/>
</dbReference>
<dbReference type="GeneID" id="2539023"/>
<dbReference type="KEGG" id="spo:2539023"/>
<dbReference type="PomBase" id="SPCC594.05c"/>
<dbReference type="VEuPathDB" id="FungiDB:SPCC594.05c"/>
<dbReference type="eggNOG" id="KOG1632">
    <property type="taxonomic scope" value="Eukaryota"/>
</dbReference>
<dbReference type="HOGENOM" id="CLU_654092_0_0_1"/>
<dbReference type="InParanoid" id="O74508"/>
<dbReference type="PhylomeDB" id="O74508"/>
<dbReference type="Reactome" id="R-SPO-9772755">
    <property type="pathway name" value="Formation of WDR5-containing histone-modifying complexes"/>
</dbReference>
<dbReference type="PRO" id="PR:O74508"/>
<dbReference type="Proteomes" id="UP000002485">
    <property type="component" value="Chromosome III"/>
</dbReference>
<dbReference type="GO" id="GO:0000785">
    <property type="term" value="C:chromatin"/>
    <property type="evidence" value="ECO:0000305"/>
    <property type="project" value="PomBase"/>
</dbReference>
<dbReference type="GO" id="GO:0005829">
    <property type="term" value="C:cytosol"/>
    <property type="evidence" value="ECO:0007005"/>
    <property type="project" value="PomBase"/>
</dbReference>
<dbReference type="GO" id="GO:0005634">
    <property type="term" value="C:nucleus"/>
    <property type="evidence" value="ECO:0007005"/>
    <property type="project" value="PomBase"/>
</dbReference>
<dbReference type="GO" id="GO:0048188">
    <property type="term" value="C:Set1C/COMPASS complex"/>
    <property type="evidence" value="ECO:0000314"/>
    <property type="project" value="PomBase"/>
</dbReference>
<dbReference type="GO" id="GO:0035064">
    <property type="term" value="F:methylated histone binding"/>
    <property type="evidence" value="ECO:0000318"/>
    <property type="project" value="GO_Central"/>
</dbReference>
<dbReference type="GO" id="GO:0008270">
    <property type="term" value="F:zinc ion binding"/>
    <property type="evidence" value="ECO:0007669"/>
    <property type="project" value="UniProtKB-KW"/>
</dbReference>
<dbReference type="GO" id="GO:0045893">
    <property type="term" value="P:positive regulation of DNA-templated transcription"/>
    <property type="evidence" value="ECO:0000318"/>
    <property type="project" value="GO_Central"/>
</dbReference>
<dbReference type="GO" id="GO:0045815">
    <property type="term" value="P:transcription initiation-coupled chromatin remodeling"/>
    <property type="evidence" value="ECO:0000305"/>
    <property type="project" value="PomBase"/>
</dbReference>
<dbReference type="CDD" id="cd16039">
    <property type="entry name" value="PHD_SPP1"/>
    <property type="match status" value="1"/>
</dbReference>
<dbReference type="Gene3D" id="3.30.40.10">
    <property type="entry name" value="Zinc/RING finger domain, C3HC4 (zinc finger)"/>
    <property type="match status" value="1"/>
</dbReference>
<dbReference type="InterPro" id="IPR037869">
    <property type="entry name" value="Spp1/CFP1"/>
</dbReference>
<dbReference type="InterPro" id="IPR019786">
    <property type="entry name" value="Zinc_finger_PHD-type_CS"/>
</dbReference>
<dbReference type="InterPro" id="IPR011011">
    <property type="entry name" value="Znf_FYVE_PHD"/>
</dbReference>
<dbReference type="InterPro" id="IPR001965">
    <property type="entry name" value="Znf_PHD"/>
</dbReference>
<dbReference type="InterPro" id="IPR019787">
    <property type="entry name" value="Znf_PHD-finger"/>
</dbReference>
<dbReference type="InterPro" id="IPR013083">
    <property type="entry name" value="Znf_RING/FYVE/PHD"/>
</dbReference>
<dbReference type="PANTHER" id="PTHR46174">
    <property type="entry name" value="CXXC-TYPE ZINC FINGER PROTEIN 1"/>
    <property type="match status" value="1"/>
</dbReference>
<dbReference type="PANTHER" id="PTHR46174:SF1">
    <property type="entry name" value="CXXC-TYPE ZINC FINGER PROTEIN 1"/>
    <property type="match status" value="1"/>
</dbReference>
<dbReference type="Pfam" id="PF00628">
    <property type="entry name" value="PHD"/>
    <property type="match status" value="1"/>
</dbReference>
<dbReference type="SMART" id="SM00249">
    <property type="entry name" value="PHD"/>
    <property type="match status" value="1"/>
</dbReference>
<dbReference type="SUPFAM" id="SSF57903">
    <property type="entry name" value="FYVE/PHD zinc finger"/>
    <property type="match status" value="1"/>
</dbReference>
<dbReference type="PROSITE" id="PS01359">
    <property type="entry name" value="ZF_PHD_1"/>
    <property type="match status" value="1"/>
</dbReference>
<dbReference type="PROSITE" id="PS50016">
    <property type="entry name" value="ZF_PHD_2"/>
    <property type="match status" value="1"/>
</dbReference>
<gene>
    <name type="primary">spp1</name>
    <name type="ORF">SPCC594.05c</name>
</gene>
<accession>O74508</accession>
<name>SPP1_SCHPO</name>
<proteinExistence type="predicted"/>
<reference evidence="6" key="1">
    <citation type="journal article" date="2002" name="Nature">
        <title>The genome sequence of Schizosaccharomyces pombe.</title>
        <authorList>
            <person name="Wood V."/>
            <person name="Gwilliam R."/>
            <person name="Rajandream M.A."/>
            <person name="Lyne M.H."/>
            <person name="Lyne R."/>
            <person name="Stewart A."/>
            <person name="Sgouros J.G."/>
            <person name="Peat N."/>
            <person name="Hayles J."/>
            <person name="Baker S.G."/>
            <person name="Basham D."/>
            <person name="Bowman S."/>
            <person name="Brooks K."/>
            <person name="Brown D."/>
            <person name="Brown S."/>
            <person name="Chillingworth T."/>
            <person name="Churcher C.M."/>
            <person name="Collins M."/>
            <person name="Connor R."/>
            <person name="Cronin A."/>
            <person name="Davis P."/>
            <person name="Feltwell T."/>
            <person name="Fraser A."/>
            <person name="Gentles S."/>
            <person name="Goble A."/>
            <person name="Hamlin N."/>
            <person name="Harris D.E."/>
            <person name="Hidalgo J."/>
            <person name="Hodgson G."/>
            <person name="Holroyd S."/>
            <person name="Hornsby T."/>
            <person name="Howarth S."/>
            <person name="Huckle E.J."/>
            <person name="Hunt S."/>
            <person name="Jagels K."/>
            <person name="James K.D."/>
            <person name="Jones L."/>
            <person name="Jones M."/>
            <person name="Leather S."/>
            <person name="McDonald S."/>
            <person name="McLean J."/>
            <person name="Mooney P."/>
            <person name="Moule S."/>
            <person name="Mungall K.L."/>
            <person name="Murphy L.D."/>
            <person name="Niblett D."/>
            <person name="Odell C."/>
            <person name="Oliver K."/>
            <person name="O'Neil S."/>
            <person name="Pearson D."/>
            <person name="Quail M.A."/>
            <person name="Rabbinowitsch E."/>
            <person name="Rutherford K.M."/>
            <person name="Rutter S."/>
            <person name="Saunders D."/>
            <person name="Seeger K."/>
            <person name="Sharp S."/>
            <person name="Skelton J."/>
            <person name="Simmonds M.N."/>
            <person name="Squares R."/>
            <person name="Squares S."/>
            <person name="Stevens K."/>
            <person name="Taylor K."/>
            <person name="Taylor R.G."/>
            <person name="Tivey A."/>
            <person name="Walsh S.V."/>
            <person name="Warren T."/>
            <person name="Whitehead S."/>
            <person name="Woodward J.R."/>
            <person name="Volckaert G."/>
            <person name="Aert R."/>
            <person name="Robben J."/>
            <person name="Grymonprez B."/>
            <person name="Weltjens I."/>
            <person name="Vanstreels E."/>
            <person name="Rieger M."/>
            <person name="Schaefer M."/>
            <person name="Mueller-Auer S."/>
            <person name="Gabel C."/>
            <person name="Fuchs M."/>
            <person name="Duesterhoeft A."/>
            <person name="Fritzc C."/>
            <person name="Holzer E."/>
            <person name="Moestl D."/>
            <person name="Hilbert H."/>
            <person name="Borzym K."/>
            <person name="Langer I."/>
            <person name="Beck A."/>
            <person name="Lehrach H."/>
            <person name="Reinhardt R."/>
            <person name="Pohl T.M."/>
            <person name="Eger P."/>
            <person name="Zimmermann W."/>
            <person name="Wedler H."/>
            <person name="Wambutt R."/>
            <person name="Purnelle B."/>
            <person name="Goffeau A."/>
            <person name="Cadieu E."/>
            <person name="Dreano S."/>
            <person name="Gloux S."/>
            <person name="Lelaure V."/>
            <person name="Mottier S."/>
            <person name="Galibert F."/>
            <person name="Aves S.J."/>
            <person name="Xiang Z."/>
            <person name="Hunt C."/>
            <person name="Moore K."/>
            <person name="Hurst S.M."/>
            <person name="Lucas M."/>
            <person name="Rochet M."/>
            <person name="Gaillardin C."/>
            <person name="Tallada V.A."/>
            <person name="Garzon A."/>
            <person name="Thode G."/>
            <person name="Daga R.R."/>
            <person name="Cruzado L."/>
            <person name="Jimenez J."/>
            <person name="Sanchez M."/>
            <person name="del Rey F."/>
            <person name="Benito J."/>
            <person name="Dominguez A."/>
            <person name="Revuelta J.L."/>
            <person name="Moreno S."/>
            <person name="Armstrong J."/>
            <person name="Forsburg S.L."/>
            <person name="Cerutti L."/>
            <person name="Lowe T."/>
            <person name="McCombie W.R."/>
            <person name="Paulsen I."/>
            <person name="Potashkin J."/>
            <person name="Shpakovski G.V."/>
            <person name="Ussery D."/>
            <person name="Barrell B.G."/>
            <person name="Nurse P."/>
        </authorList>
    </citation>
    <scope>NUCLEOTIDE SEQUENCE [LARGE SCALE GENOMIC DNA]</scope>
    <source>
        <strain>972 / ATCC 24843</strain>
    </source>
</reference>
<reference evidence="5" key="2">
    <citation type="journal article" date="2003" name="J. Biol. Chem.">
        <title>High conservation of the Set1/Rad6 axis of histone 3 lysine 4 methylation in budding and fission yeasts.</title>
        <authorList>
            <person name="Roguev A."/>
            <person name="Schaft D."/>
            <person name="Shevchenko A."/>
            <person name="Aasland R."/>
            <person name="Shevchenko A."/>
            <person name="Stewart A.F."/>
        </authorList>
    </citation>
    <scope>FUNCTION</scope>
    <scope>COMPOSITION OF THE SET1 COMPLEX</scope>
</reference>
<reference evidence="5" key="3">
    <citation type="journal article" date="2004" name="Mol. Cell. Proteomics">
        <title>A comparative analysis of an orthologous proteomic environment in the yeasts Saccharomyces cerevisiae and Schizosaccharomyces pombe.</title>
        <authorList>
            <person name="Roguev A."/>
            <person name="Shevchenko A."/>
            <person name="Schaft D."/>
            <person name="Thomas H."/>
            <person name="Stewart A.F."/>
            <person name="Shevchenko A."/>
        </authorList>
    </citation>
    <scope>COMPOSITION OF THE SET1 COMPLEX</scope>
</reference>
<evidence type="ECO:0000255" key="1">
    <source>
        <dbReference type="PROSITE-ProRule" id="PRU00146"/>
    </source>
</evidence>
<evidence type="ECO:0000256" key="2">
    <source>
        <dbReference type="SAM" id="MobiDB-lite"/>
    </source>
</evidence>
<evidence type="ECO:0000269" key="3">
    <source>
    </source>
</evidence>
<evidence type="ECO:0000269" key="4">
    <source>
    </source>
</evidence>
<evidence type="ECO:0000305" key="5"/>
<evidence type="ECO:0000312" key="6">
    <source>
        <dbReference type="EMBL" id="CAA20664.1"/>
    </source>
</evidence>
<feature type="chain" id="PRO_0000059337" description="Set1 complex component spp1">
    <location>
        <begin position="1"/>
        <end position="424"/>
    </location>
</feature>
<feature type="zinc finger region" description="PHD-type" evidence="1">
    <location>
        <begin position="118"/>
        <end position="168"/>
    </location>
</feature>
<feature type="region of interest" description="Disordered" evidence="2">
    <location>
        <begin position="80"/>
        <end position="108"/>
    </location>
</feature>
<feature type="compositionally biased region" description="Basic residues" evidence="2">
    <location>
        <begin position="92"/>
        <end position="102"/>
    </location>
</feature>